<accession>Q51575</accession>
<accession>Q9HZB3</accession>
<protein>
    <recommendedName>
        <fullName>Type II secretion system protein N</fullName>
        <shortName>T2SS protein N</shortName>
    </recommendedName>
    <alternativeName>
        <fullName>General secretion pathway protein N</fullName>
    </alternativeName>
    <alternativeName>
        <fullName>Protein XcpP</fullName>
    </alternativeName>
</protein>
<keyword id="KW-0997">Cell inner membrane</keyword>
<keyword id="KW-1003">Cell membrane</keyword>
<keyword id="KW-0472">Membrane</keyword>
<keyword id="KW-0653">Protein transport</keyword>
<keyword id="KW-1185">Reference proteome</keyword>
<keyword id="KW-0735">Signal-anchor</keyword>
<keyword id="KW-0812">Transmembrane</keyword>
<keyword id="KW-1133">Transmembrane helix</keyword>
<keyword id="KW-0813">Transport</keyword>
<gene>
    <name type="primary">xcpP</name>
    <name type="ordered locus">PA3104</name>
</gene>
<organism>
    <name type="scientific">Pseudomonas aeruginosa (strain ATCC 15692 / DSM 22644 / CIP 104116 / JCM 14847 / LMG 12228 / 1C / PRS 101 / PAO1)</name>
    <dbReference type="NCBI Taxonomy" id="208964"/>
    <lineage>
        <taxon>Bacteria</taxon>
        <taxon>Pseudomonadati</taxon>
        <taxon>Pseudomonadota</taxon>
        <taxon>Gammaproteobacteria</taxon>
        <taxon>Pseudomonadales</taxon>
        <taxon>Pseudomonadaceae</taxon>
        <taxon>Pseudomonas</taxon>
    </lineage>
</organism>
<feature type="chain" id="PRO_0000195055" description="Type II secretion system protein N">
    <location>
        <begin position="1"/>
        <end position="235"/>
    </location>
</feature>
<feature type="topological domain" description="Cytoplasmic" evidence="2">
    <location>
        <begin position="1"/>
        <end position="34"/>
    </location>
</feature>
<feature type="transmembrane region" description="Helical; Signal-anchor for type II membrane protein" evidence="2">
    <location>
        <begin position="35"/>
        <end position="55"/>
    </location>
</feature>
<feature type="topological domain" description="Periplasmic" evidence="2">
    <location>
        <begin position="56"/>
        <end position="235"/>
    </location>
</feature>
<feature type="region of interest" description="Disordered" evidence="3">
    <location>
        <begin position="205"/>
        <end position="235"/>
    </location>
</feature>
<feature type="compositionally biased region" description="Low complexity" evidence="3">
    <location>
        <begin position="226"/>
        <end position="235"/>
    </location>
</feature>
<evidence type="ECO:0000250" key="1"/>
<evidence type="ECO:0000255" key="2"/>
<evidence type="ECO:0000256" key="3">
    <source>
        <dbReference type="SAM" id="MobiDB-lite"/>
    </source>
</evidence>
<evidence type="ECO:0000269" key="4">
    <source>
    </source>
</evidence>
<dbReference type="EMBL" id="X68594">
    <property type="protein sequence ID" value="CAA48581.1"/>
    <property type="molecule type" value="Genomic_DNA"/>
</dbReference>
<dbReference type="EMBL" id="AE004091">
    <property type="protein sequence ID" value="AAG06492.1"/>
    <property type="molecule type" value="Genomic_DNA"/>
</dbReference>
<dbReference type="PIR" id="S39652">
    <property type="entry name" value="S39652"/>
</dbReference>
<dbReference type="RefSeq" id="NP_251794.1">
    <property type="nucleotide sequence ID" value="NC_002516.2"/>
</dbReference>
<dbReference type="RefSeq" id="WP_003119750.1">
    <property type="nucleotide sequence ID" value="NZ_QZGE01000009.1"/>
</dbReference>
<dbReference type="STRING" id="208964.PA3104"/>
<dbReference type="PaxDb" id="208964-PA3104"/>
<dbReference type="DNASU" id="877805"/>
<dbReference type="GeneID" id="877805"/>
<dbReference type="KEGG" id="pae:PA3104"/>
<dbReference type="PATRIC" id="fig|208964.12.peg.3256"/>
<dbReference type="PseudoCAP" id="PA3104"/>
<dbReference type="HOGENOM" id="CLU_1306166_0_0_6"/>
<dbReference type="InParanoid" id="Q51575"/>
<dbReference type="OrthoDB" id="6997042at2"/>
<dbReference type="BioCyc" id="PAER208964:G1FZ6-3160-MONOMER"/>
<dbReference type="Proteomes" id="UP000002438">
    <property type="component" value="Chromosome"/>
</dbReference>
<dbReference type="GO" id="GO:0005886">
    <property type="term" value="C:plasma membrane"/>
    <property type="evidence" value="ECO:0007669"/>
    <property type="project" value="UniProtKB-SubCell"/>
</dbReference>
<dbReference type="GO" id="GO:0015627">
    <property type="term" value="C:type II protein secretion system complex"/>
    <property type="evidence" value="ECO:0000314"/>
    <property type="project" value="PseudoCAP"/>
</dbReference>
<dbReference type="GO" id="GO:0015628">
    <property type="term" value="P:protein secretion by the type II secretion system"/>
    <property type="evidence" value="ECO:0000314"/>
    <property type="project" value="PseudoCAP"/>
</dbReference>
<dbReference type="Gene3D" id="2.30.30.830">
    <property type="match status" value="1"/>
</dbReference>
<dbReference type="InterPro" id="IPR024961">
    <property type="entry name" value="T2SS_GspC_N"/>
</dbReference>
<dbReference type="Pfam" id="PF11356">
    <property type="entry name" value="T2SSC"/>
    <property type="match status" value="1"/>
</dbReference>
<name>GSPN_PSEAE</name>
<proteinExistence type="evidence at protein level"/>
<sequence length="235" mass="25497">MIPRRSSDITIKTRSDVLPFSGASSRWLQRYAPALLAVALIIAMSISLAWQAAGWLRLQRSPVAVAASPVSHESIRSDPTRLARLFGTSAQDPNAPPPATNLDLVLKGSFVQSDPKLSSAIIQRQGDKPHRYAVGGEISDGVKLHAVYRDRVELQRGGRLESLPFPHRSGGLLASADDITSENDSIEQLQSLQDENAAALRERLDALRQQMEATPIAEPAEEDSSEPTTTPTESD</sequence>
<reference key="1">
    <citation type="journal article" date="1993" name="Mol. Microbiol.">
        <title>Xcp-mediated protein secretion in Pseudomonas aeruginosa: identification of two additional genes and evidence for regulation of xcp gene expression.</title>
        <authorList>
            <person name="Akrim M."/>
            <person name="Bally M."/>
            <person name="Ball G."/>
            <person name="Tommassen J."/>
            <person name="Teerink H."/>
            <person name="Filloux A."/>
            <person name="Lazdunski A."/>
        </authorList>
    </citation>
    <scope>NUCLEOTIDE SEQUENCE [GENOMIC DNA]</scope>
    <source>
        <strain>ATCC 15692 / DSM 22644 / CIP 104116 / JCM 14847 / LMG 12228 / 1C / PRS 101 / PAO1</strain>
    </source>
</reference>
<reference key="2">
    <citation type="journal article" date="2000" name="Nature">
        <title>Complete genome sequence of Pseudomonas aeruginosa PAO1, an opportunistic pathogen.</title>
        <authorList>
            <person name="Stover C.K."/>
            <person name="Pham X.-Q.T."/>
            <person name="Erwin A.L."/>
            <person name="Mizoguchi S.D."/>
            <person name="Warrener P."/>
            <person name="Hickey M.J."/>
            <person name="Brinkman F.S.L."/>
            <person name="Hufnagle W.O."/>
            <person name="Kowalik D.J."/>
            <person name="Lagrou M."/>
            <person name="Garber R.L."/>
            <person name="Goltry L."/>
            <person name="Tolentino E."/>
            <person name="Westbrock-Wadman S."/>
            <person name="Yuan Y."/>
            <person name="Brody L.L."/>
            <person name="Coulter S.N."/>
            <person name="Folger K.R."/>
            <person name="Kas A."/>
            <person name="Larbig K."/>
            <person name="Lim R.M."/>
            <person name="Smith K.A."/>
            <person name="Spencer D.H."/>
            <person name="Wong G.K.-S."/>
            <person name="Wu Z."/>
            <person name="Paulsen I.T."/>
            <person name="Reizer J."/>
            <person name="Saier M.H. Jr."/>
            <person name="Hancock R.E.W."/>
            <person name="Lory S."/>
            <person name="Olson M.V."/>
        </authorList>
    </citation>
    <scope>NUCLEOTIDE SEQUENCE [LARGE SCALE GENOMIC DNA]</scope>
    <source>
        <strain>ATCC 15692 / DSM 22644 / CIP 104116 / JCM 14847 / LMG 12228 / 1C / PRS 101 / PAO1</strain>
    </source>
</reference>
<reference key="3">
    <citation type="journal article" date="1996" name="J. Bacteriol.">
        <title>Membrane topology of three Xcp proteins involved in exoprotein transport by Pseudomonas aeruginosa.</title>
        <authorList>
            <person name="Bleves S."/>
            <person name="Lazdunski A."/>
            <person name="Filloux A."/>
        </authorList>
    </citation>
    <scope>SUBCELLULAR LOCATION</scope>
    <scope>TOPOLOGY</scope>
</reference>
<comment type="function">
    <text evidence="1">Involved in a type II secretion system (T2SS, formerly general secretion pathway, GSP) for the export of proteins (By similarity). Required for the translocation of a variety of enzymes across the outer membrane.</text>
</comment>
<comment type="subcellular location">
    <subcellularLocation>
        <location evidence="4">Cell inner membrane</location>
        <topology evidence="4">Single-pass type II membrane protein</topology>
    </subcellularLocation>
</comment>